<sequence length="101" mass="11615">MAKQSMIARDVKRAKLADKFYAKREELKKIISDANSSDEHRWAAVLKLQTLPRDSSPSRQRNRCRQTGRPHGVLRKFGLSRIKVREAAMRGEIPGLKKASW</sequence>
<feature type="chain" id="PRO_1000128284" description="Small ribosomal subunit protein uS14">
    <location>
        <begin position="1"/>
        <end position="101"/>
    </location>
</feature>
<accession>B0BSU4</accession>
<evidence type="ECO:0000255" key="1">
    <source>
        <dbReference type="HAMAP-Rule" id="MF_00537"/>
    </source>
</evidence>
<evidence type="ECO:0000305" key="2"/>
<reference key="1">
    <citation type="journal article" date="2008" name="PLoS ONE">
        <title>Genome biology of Actinobacillus pleuropneumoniae JL03, an isolate of serotype 3 prevalent in China.</title>
        <authorList>
            <person name="Xu Z."/>
            <person name="Zhou Y."/>
            <person name="Li L."/>
            <person name="Zhou R."/>
            <person name="Xiao S."/>
            <person name="Wan Y."/>
            <person name="Zhang S."/>
            <person name="Wang K."/>
            <person name="Li W."/>
            <person name="Li L."/>
            <person name="Jin H."/>
            <person name="Kang M."/>
            <person name="Dalai B."/>
            <person name="Li T."/>
            <person name="Liu L."/>
            <person name="Cheng Y."/>
            <person name="Zhang L."/>
            <person name="Xu T."/>
            <person name="Zheng H."/>
            <person name="Pu S."/>
            <person name="Wang B."/>
            <person name="Gu W."/>
            <person name="Zhang X.L."/>
            <person name="Zhu G.-F."/>
            <person name="Wang S."/>
            <person name="Zhao G.-P."/>
            <person name="Chen H."/>
        </authorList>
    </citation>
    <scope>NUCLEOTIDE SEQUENCE [LARGE SCALE GENOMIC DNA]</scope>
    <source>
        <strain>JL03</strain>
    </source>
</reference>
<protein>
    <recommendedName>
        <fullName evidence="1">Small ribosomal subunit protein uS14</fullName>
    </recommendedName>
    <alternativeName>
        <fullName evidence="2">30S ribosomal protein S14</fullName>
    </alternativeName>
</protein>
<comment type="function">
    <text evidence="1">Binds 16S rRNA, required for the assembly of 30S particles and may also be responsible for determining the conformation of the 16S rRNA at the A site.</text>
</comment>
<comment type="subunit">
    <text evidence="1">Part of the 30S ribosomal subunit. Contacts proteins S3 and S10.</text>
</comment>
<comment type="similarity">
    <text evidence="1">Belongs to the universal ribosomal protein uS14 family.</text>
</comment>
<gene>
    <name evidence="1" type="primary">rpsN</name>
    <name type="ordered locus">APJL_1808</name>
</gene>
<organism>
    <name type="scientific">Actinobacillus pleuropneumoniae serotype 3 (strain JL03)</name>
    <dbReference type="NCBI Taxonomy" id="434271"/>
    <lineage>
        <taxon>Bacteria</taxon>
        <taxon>Pseudomonadati</taxon>
        <taxon>Pseudomonadota</taxon>
        <taxon>Gammaproteobacteria</taxon>
        <taxon>Pasteurellales</taxon>
        <taxon>Pasteurellaceae</taxon>
        <taxon>Actinobacillus</taxon>
    </lineage>
</organism>
<keyword id="KW-0687">Ribonucleoprotein</keyword>
<keyword id="KW-0689">Ribosomal protein</keyword>
<keyword id="KW-0694">RNA-binding</keyword>
<keyword id="KW-0699">rRNA-binding</keyword>
<dbReference type="EMBL" id="CP000687">
    <property type="protein sequence ID" value="ABY70358.1"/>
    <property type="molecule type" value="Genomic_DNA"/>
</dbReference>
<dbReference type="RefSeq" id="WP_012263388.1">
    <property type="nucleotide sequence ID" value="NC_010278.1"/>
</dbReference>
<dbReference type="SMR" id="B0BSU4"/>
<dbReference type="KEGG" id="apj:APJL_1808"/>
<dbReference type="HOGENOM" id="CLU_139869_0_1_6"/>
<dbReference type="Proteomes" id="UP000008547">
    <property type="component" value="Chromosome"/>
</dbReference>
<dbReference type="GO" id="GO:0005737">
    <property type="term" value="C:cytoplasm"/>
    <property type="evidence" value="ECO:0007669"/>
    <property type="project" value="UniProtKB-ARBA"/>
</dbReference>
<dbReference type="GO" id="GO:0015935">
    <property type="term" value="C:small ribosomal subunit"/>
    <property type="evidence" value="ECO:0007669"/>
    <property type="project" value="TreeGrafter"/>
</dbReference>
<dbReference type="GO" id="GO:0019843">
    <property type="term" value="F:rRNA binding"/>
    <property type="evidence" value="ECO:0007669"/>
    <property type="project" value="UniProtKB-UniRule"/>
</dbReference>
<dbReference type="GO" id="GO:0003735">
    <property type="term" value="F:structural constituent of ribosome"/>
    <property type="evidence" value="ECO:0007669"/>
    <property type="project" value="InterPro"/>
</dbReference>
<dbReference type="GO" id="GO:0006412">
    <property type="term" value="P:translation"/>
    <property type="evidence" value="ECO:0007669"/>
    <property type="project" value="UniProtKB-UniRule"/>
</dbReference>
<dbReference type="FunFam" id="1.10.287.1480:FF:000001">
    <property type="entry name" value="30S ribosomal protein S14"/>
    <property type="match status" value="1"/>
</dbReference>
<dbReference type="Gene3D" id="1.10.287.1480">
    <property type="match status" value="1"/>
</dbReference>
<dbReference type="HAMAP" id="MF_00537">
    <property type="entry name" value="Ribosomal_uS14_1"/>
    <property type="match status" value="1"/>
</dbReference>
<dbReference type="InterPro" id="IPR001209">
    <property type="entry name" value="Ribosomal_uS14"/>
</dbReference>
<dbReference type="InterPro" id="IPR023036">
    <property type="entry name" value="Ribosomal_uS14_bac/plastid"/>
</dbReference>
<dbReference type="InterPro" id="IPR018271">
    <property type="entry name" value="Ribosomal_uS14_CS"/>
</dbReference>
<dbReference type="NCBIfam" id="NF006477">
    <property type="entry name" value="PRK08881.1"/>
    <property type="match status" value="1"/>
</dbReference>
<dbReference type="PANTHER" id="PTHR19836">
    <property type="entry name" value="30S RIBOSOMAL PROTEIN S14"/>
    <property type="match status" value="1"/>
</dbReference>
<dbReference type="PANTHER" id="PTHR19836:SF19">
    <property type="entry name" value="SMALL RIBOSOMAL SUBUNIT PROTEIN US14M"/>
    <property type="match status" value="1"/>
</dbReference>
<dbReference type="Pfam" id="PF00253">
    <property type="entry name" value="Ribosomal_S14"/>
    <property type="match status" value="1"/>
</dbReference>
<dbReference type="SUPFAM" id="SSF57716">
    <property type="entry name" value="Glucocorticoid receptor-like (DNA-binding domain)"/>
    <property type="match status" value="1"/>
</dbReference>
<dbReference type="PROSITE" id="PS00527">
    <property type="entry name" value="RIBOSOMAL_S14"/>
    <property type="match status" value="1"/>
</dbReference>
<proteinExistence type="inferred from homology"/>
<name>RS14_ACTPJ</name>